<organism>
    <name type="scientific">Staphylococcus aureus (strain Mu50 / ATCC 700699)</name>
    <dbReference type="NCBI Taxonomy" id="158878"/>
    <lineage>
        <taxon>Bacteria</taxon>
        <taxon>Bacillati</taxon>
        <taxon>Bacillota</taxon>
        <taxon>Bacilli</taxon>
        <taxon>Bacillales</taxon>
        <taxon>Staphylococcaceae</taxon>
        <taxon>Staphylococcus</taxon>
    </lineage>
</organism>
<sequence>MGKQCFVTGRKASTGNRRSHALNSTKRRWNANLQKVRILVDGKPKKVWVSARALKSGKVTRV</sequence>
<keyword id="KW-0687">Ribonucleoprotein</keyword>
<keyword id="KW-0689">Ribosomal protein</keyword>
<dbReference type="EMBL" id="BA000017">
    <property type="protein sequence ID" value="BAB57386.1"/>
    <property type="molecule type" value="Genomic_DNA"/>
</dbReference>
<dbReference type="RefSeq" id="WP_000517908.1">
    <property type="nucleotide sequence ID" value="NC_002758.2"/>
</dbReference>
<dbReference type="SMR" id="P66152"/>
<dbReference type="GeneID" id="98345539"/>
<dbReference type="KEGG" id="sav:SAV1224"/>
<dbReference type="HOGENOM" id="CLU_064548_7_1_9"/>
<dbReference type="PhylomeDB" id="P66152"/>
<dbReference type="Proteomes" id="UP000002481">
    <property type="component" value="Chromosome"/>
</dbReference>
<dbReference type="GO" id="GO:1990904">
    <property type="term" value="C:ribonucleoprotein complex"/>
    <property type="evidence" value="ECO:0007669"/>
    <property type="project" value="UniProtKB-KW"/>
</dbReference>
<dbReference type="GO" id="GO:0005840">
    <property type="term" value="C:ribosome"/>
    <property type="evidence" value="ECO:0007669"/>
    <property type="project" value="UniProtKB-KW"/>
</dbReference>
<dbReference type="GO" id="GO:0003735">
    <property type="term" value="F:structural constituent of ribosome"/>
    <property type="evidence" value="ECO:0007669"/>
    <property type="project" value="InterPro"/>
</dbReference>
<dbReference type="GO" id="GO:0006412">
    <property type="term" value="P:translation"/>
    <property type="evidence" value="ECO:0007669"/>
    <property type="project" value="UniProtKB-UniRule"/>
</dbReference>
<dbReference type="Gene3D" id="2.30.170.40">
    <property type="entry name" value="Ribosomal protein L28/L24"/>
    <property type="match status" value="1"/>
</dbReference>
<dbReference type="HAMAP" id="MF_00373">
    <property type="entry name" value="Ribosomal_bL28"/>
    <property type="match status" value="1"/>
</dbReference>
<dbReference type="InterPro" id="IPR050096">
    <property type="entry name" value="Bacterial_rp_bL28"/>
</dbReference>
<dbReference type="InterPro" id="IPR026569">
    <property type="entry name" value="Ribosomal_bL28"/>
</dbReference>
<dbReference type="InterPro" id="IPR034704">
    <property type="entry name" value="Ribosomal_bL28/bL31-like_sf"/>
</dbReference>
<dbReference type="InterPro" id="IPR001383">
    <property type="entry name" value="Ribosomal_bL28_bact-type"/>
</dbReference>
<dbReference type="InterPro" id="IPR037147">
    <property type="entry name" value="Ribosomal_bL28_sf"/>
</dbReference>
<dbReference type="NCBIfam" id="TIGR00009">
    <property type="entry name" value="L28"/>
    <property type="match status" value="1"/>
</dbReference>
<dbReference type="PANTHER" id="PTHR39080">
    <property type="entry name" value="50S RIBOSOMAL PROTEIN L28"/>
    <property type="match status" value="1"/>
</dbReference>
<dbReference type="PANTHER" id="PTHR39080:SF1">
    <property type="entry name" value="LARGE RIBOSOMAL SUBUNIT PROTEIN BL28A"/>
    <property type="match status" value="1"/>
</dbReference>
<dbReference type="Pfam" id="PF00830">
    <property type="entry name" value="Ribosomal_L28"/>
    <property type="match status" value="1"/>
</dbReference>
<dbReference type="SUPFAM" id="SSF143800">
    <property type="entry name" value="L28p-like"/>
    <property type="match status" value="1"/>
</dbReference>
<gene>
    <name evidence="1" type="primary">rpmB</name>
    <name type="ordered locus">SAV1224</name>
</gene>
<evidence type="ECO:0000255" key="1">
    <source>
        <dbReference type="HAMAP-Rule" id="MF_00373"/>
    </source>
</evidence>
<evidence type="ECO:0000256" key="2">
    <source>
        <dbReference type="SAM" id="MobiDB-lite"/>
    </source>
</evidence>
<evidence type="ECO:0000305" key="3"/>
<comment type="similarity">
    <text evidence="1">Belongs to the bacterial ribosomal protein bL28 family.</text>
</comment>
<name>RL28_STAAM</name>
<reference key="1">
    <citation type="journal article" date="2001" name="Lancet">
        <title>Whole genome sequencing of meticillin-resistant Staphylococcus aureus.</title>
        <authorList>
            <person name="Kuroda M."/>
            <person name="Ohta T."/>
            <person name="Uchiyama I."/>
            <person name="Baba T."/>
            <person name="Yuzawa H."/>
            <person name="Kobayashi I."/>
            <person name="Cui L."/>
            <person name="Oguchi A."/>
            <person name="Aoki K."/>
            <person name="Nagai Y."/>
            <person name="Lian J.-Q."/>
            <person name="Ito T."/>
            <person name="Kanamori M."/>
            <person name="Matsumaru H."/>
            <person name="Maruyama A."/>
            <person name="Murakami H."/>
            <person name="Hosoyama A."/>
            <person name="Mizutani-Ui Y."/>
            <person name="Takahashi N.K."/>
            <person name="Sawano T."/>
            <person name="Inoue R."/>
            <person name="Kaito C."/>
            <person name="Sekimizu K."/>
            <person name="Hirakawa H."/>
            <person name="Kuhara S."/>
            <person name="Goto S."/>
            <person name="Yabuzaki J."/>
            <person name="Kanehisa M."/>
            <person name="Yamashita A."/>
            <person name="Oshima K."/>
            <person name="Furuya K."/>
            <person name="Yoshino C."/>
            <person name="Shiba T."/>
            <person name="Hattori M."/>
            <person name="Ogasawara N."/>
            <person name="Hayashi H."/>
            <person name="Hiramatsu K."/>
        </authorList>
    </citation>
    <scope>NUCLEOTIDE SEQUENCE [LARGE SCALE GENOMIC DNA]</scope>
    <source>
        <strain>Mu50 / ATCC 700699</strain>
    </source>
</reference>
<accession>P66152</accession>
<accession>Q99UP4</accession>
<proteinExistence type="inferred from homology"/>
<protein>
    <recommendedName>
        <fullName evidence="1">Large ribosomal subunit protein bL28</fullName>
    </recommendedName>
    <alternativeName>
        <fullName evidence="3">50S ribosomal protein L28</fullName>
    </alternativeName>
</protein>
<feature type="chain" id="PRO_0000178549" description="Large ribosomal subunit protein bL28">
    <location>
        <begin position="1"/>
        <end position="62"/>
    </location>
</feature>
<feature type="region of interest" description="Disordered" evidence="2">
    <location>
        <begin position="1"/>
        <end position="22"/>
    </location>
</feature>